<protein>
    <recommendedName>
        <fullName evidence="1">Ribosome-recycling factor</fullName>
        <shortName evidence="1">RRF</shortName>
    </recommendedName>
    <alternativeName>
        <fullName evidence="1">Ribosome-releasing factor</fullName>
    </alternativeName>
</protein>
<feature type="chain" id="PRO_1000074593" description="Ribosome-recycling factor">
    <location>
        <begin position="1"/>
        <end position="185"/>
    </location>
</feature>
<feature type="region of interest" description="Disordered" evidence="2">
    <location>
        <begin position="142"/>
        <end position="165"/>
    </location>
</feature>
<sequence length="185" mass="20584">MIEETLLEAEEKMDKAVEVAKEDFSAVRTGRANPGLFAKVMVDYYGAPTPLQQLASFAVPEARTLLITPFDRSALGDIEKALSNSEVGANPSNDGNVIRVVMPELTQERRREYVKIVRGKSEDAKISIRNIRRKAKESLDKIVKDGDAGEDEGSRAEKELDGLTKTHTENIDELLKRKEAELLEV</sequence>
<name>RRF_RENSM</name>
<gene>
    <name evidence="1" type="primary">frr</name>
    <name type="ordered locus">RSal33209_0532</name>
</gene>
<accession>A9WL12</accession>
<dbReference type="EMBL" id="CP000910">
    <property type="protein sequence ID" value="ABY22281.1"/>
    <property type="molecule type" value="Genomic_DNA"/>
</dbReference>
<dbReference type="RefSeq" id="WP_012243985.1">
    <property type="nucleotide sequence ID" value="NC_010168.1"/>
</dbReference>
<dbReference type="SMR" id="A9WL12"/>
<dbReference type="STRING" id="288705.RSal33209_0532"/>
<dbReference type="KEGG" id="rsa:RSal33209_0532"/>
<dbReference type="eggNOG" id="COG0233">
    <property type="taxonomic scope" value="Bacteria"/>
</dbReference>
<dbReference type="HOGENOM" id="CLU_073981_2_0_11"/>
<dbReference type="Proteomes" id="UP000002007">
    <property type="component" value="Chromosome"/>
</dbReference>
<dbReference type="GO" id="GO:0005737">
    <property type="term" value="C:cytoplasm"/>
    <property type="evidence" value="ECO:0007669"/>
    <property type="project" value="UniProtKB-SubCell"/>
</dbReference>
<dbReference type="GO" id="GO:0043023">
    <property type="term" value="F:ribosomal large subunit binding"/>
    <property type="evidence" value="ECO:0007669"/>
    <property type="project" value="TreeGrafter"/>
</dbReference>
<dbReference type="GO" id="GO:0006415">
    <property type="term" value="P:translational termination"/>
    <property type="evidence" value="ECO:0007669"/>
    <property type="project" value="UniProtKB-UniRule"/>
</dbReference>
<dbReference type="CDD" id="cd00520">
    <property type="entry name" value="RRF"/>
    <property type="match status" value="1"/>
</dbReference>
<dbReference type="FunFam" id="1.10.132.20:FF:000001">
    <property type="entry name" value="Ribosome-recycling factor"/>
    <property type="match status" value="1"/>
</dbReference>
<dbReference type="FunFam" id="3.30.1360.40:FF:000001">
    <property type="entry name" value="Ribosome-recycling factor"/>
    <property type="match status" value="1"/>
</dbReference>
<dbReference type="Gene3D" id="3.30.1360.40">
    <property type="match status" value="1"/>
</dbReference>
<dbReference type="Gene3D" id="1.10.132.20">
    <property type="entry name" value="Ribosome-recycling factor"/>
    <property type="match status" value="1"/>
</dbReference>
<dbReference type="HAMAP" id="MF_00040">
    <property type="entry name" value="RRF"/>
    <property type="match status" value="1"/>
</dbReference>
<dbReference type="InterPro" id="IPR002661">
    <property type="entry name" value="Ribosome_recyc_fac"/>
</dbReference>
<dbReference type="InterPro" id="IPR023584">
    <property type="entry name" value="Ribosome_recyc_fac_dom"/>
</dbReference>
<dbReference type="InterPro" id="IPR036191">
    <property type="entry name" value="RRF_sf"/>
</dbReference>
<dbReference type="NCBIfam" id="TIGR00496">
    <property type="entry name" value="frr"/>
    <property type="match status" value="1"/>
</dbReference>
<dbReference type="PANTHER" id="PTHR20982:SF3">
    <property type="entry name" value="MITOCHONDRIAL RIBOSOME RECYCLING FACTOR PSEUDO 1"/>
    <property type="match status" value="1"/>
</dbReference>
<dbReference type="PANTHER" id="PTHR20982">
    <property type="entry name" value="RIBOSOME RECYCLING FACTOR"/>
    <property type="match status" value="1"/>
</dbReference>
<dbReference type="Pfam" id="PF01765">
    <property type="entry name" value="RRF"/>
    <property type="match status" value="1"/>
</dbReference>
<dbReference type="SUPFAM" id="SSF55194">
    <property type="entry name" value="Ribosome recycling factor, RRF"/>
    <property type="match status" value="1"/>
</dbReference>
<organism>
    <name type="scientific">Renibacterium salmoninarum (strain ATCC 33209 / DSM 20767 / JCM 11484 / NBRC 15589 / NCIMB 2235)</name>
    <dbReference type="NCBI Taxonomy" id="288705"/>
    <lineage>
        <taxon>Bacteria</taxon>
        <taxon>Bacillati</taxon>
        <taxon>Actinomycetota</taxon>
        <taxon>Actinomycetes</taxon>
        <taxon>Micrococcales</taxon>
        <taxon>Micrococcaceae</taxon>
        <taxon>Renibacterium</taxon>
    </lineage>
</organism>
<proteinExistence type="inferred from homology"/>
<reference key="1">
    <citation type="journal article" date="2008" name="J. Bacteriol.">
        <title>Genome sequence of the fish pathogen Renibacterium salmoninarum suggests reductive evolution away from an environmental Arthrobacter ancestor.</title>
        <authorList>
            <person name="Wiens G.D."/>
            <person name="Rockey D.D."/>
            <person name="Wu Z."/>
            <person name="Chang J."/>
            <person name="Levy R."/>
            <person name="Crane S."/>
            <person name="Chen D.S."/>
            <person name="Capri G.R."/>
            <person name="Burnett J.R."/>
            <person name="Sudheesh P.S."/>
            <person name="Schipma M.J."/>
            <person name="Burd H."/>
            <person name="Bhattacharyya A."/>
            <person name="Rhodes L.D."/>
            <person name="Kaul R."/>
            <person name="Strom M.S."/>
        </authorList>
    </citation>
    <scope>NUCLEOTIDE SEQUENCE [LARGE SCALE GENOMIC DNA]</scope>
    <source>
        <strain>ATCC 33209 / DSM 20767 / JCM 11484 / NBRC 15589 / NCIMB 2235</strain>
    </source>
</reference>
<evidence type="ECO:0000255" key="1">
    <source>
        <dbReference type="HAMAP-Rule" id="MF_00040"/>
    </source>
</evidence>
<evidence type="ECO:0000256" key="2">
    <source>
        <dbReference type="SAM" id="MobiDB-lite"/>
    </source>
</evidence>
<comment type="function">
    <text evidence="1">Responsible for the release of ribosomes from messenger RNA at the termination of protein biosynthesis. May increase the efficiency of translation by recycling ribosomes from one round of translation to another.</text>
</comment>
<comment type="subcellular location">
    <subcellularLocation>
        <location evidence="1">Cytoplasm</location>
    </subcellularLocation>
</comment>
<comment type="similarity">
    <text evidence="1">Belongs to the RRF family.</text>
</comment>
<keyword id="KW-0963">Cytoplasm</keyword>
<keyword id="KW-0648">Protein biosynthesis</keyword>
<keyword id="KW-1185">Reference proteome</keyword>